<evidence type="ECO:0000250" key="1">
    <source>
        <dbReference type="UniProtKB" id="P02233"/>
    </source>
</evidence>
<evidence type="ECO:0000250" key="2">
    <source>
        <dbReference type="UniProtKB" id="P02234"/>
    </source>
</evidence>
<evidence type="ECO:0000250" key="3">
    <source>
        <dbReference type="UniProtKB" id="P02237"/>
    </source>
</evidence>
<evidence type="ECO:0000250" key="4">
    <source>
        <dbReference type="UniProtKB" id="P02240"/>
    </source>
</evidence>
<evidence type="ECO:0000250" key="5">
    <source>
        <dbReference type="UniProtKB" id="Q3C1F7"/>
    </source>
</evidence>
<evidence type="ECO:0000250" key="6">
    <source>
        <dbReference type="UniProtKB" id="Q43296"/>
    </source>
</evidence>
<evidence type="ECO:0000255" key="7">
    <source>
        <dbReference type="PROSITE-ProRule" id="PRU00238"/>
    </source>
</evidence>
<evidence type="ECO:0000269" key="8">
    <source>
    </source>
</evidence>
<evidence type="ECO:0000269" key="9">
    <source>
    </source>
</evidence>
<evidence type="ECO:0000303" key="10">
    <source>
    </source>
</evidence>
<evidence type="ECO:0000303" key="11">
    <source>
    </source>
</evidence>
<evidence type="ECO:0000303" key="12">
    <source>
    </source>
</evidence>
<evidence type="ECO:0000305" key="13"/>
<evidence type="ECO:0000312" key="14">
    <source>
        <dbReference type="EMBL" id="AES98238.1"/>
    </source>
</evidence>
<evidence type="ECO:0000312" key="15">
    <source>
        <dbReference type="EMBL" id="RHN56243.1"/>
    </source>
</evidence>
<sequence>MSFTDKQEALVNSSYEAFKQNLSGYSVFFYTVILEKAPAAKGLFSFLKDSAGVQDSPQLQAHAEKVFGLVRDSASQLRATGGVVLGDAALGAIHIQKGVVDPHFVVVKEALLKTIKEAAGDKWSEELSTAWEVAYDALATEIKKAMS</sequence>
<feature type="initiator methionine" description="Removed" evidence="1">
    <location>
        <position position="1"/>
    </location>
</feature>
<feature type="chain" id="PRO_0000192989" description="Leghemoglobin 6">
    <location>
        <begin position="2"/>
        <end position="147"/>
    </location>
</feature>
<feature type="domain" description="Globin" evidence="7">
    <location>
        <begin position="2"/>
        <end position="147"/>
    </location>
</feature>
<feature type="binding site" evidence="4">
    <location>
        <position position="45"/>
    </location>
    <ligand>
        <name>heme b</name>
        <dbReference type="ChEBI" id="CHEBI:60344"/>
    </ligand>
</feature>
<feature type="binding site" evidence="4">
    <location>
        <position position="62"/>
    </location>
    <ligand>
        <name>O2</name>
        <dbReference type="ChEBI" id="CHEBI:15379"/>
    </ligand>
</feature>
<feature type="binding site" evidence="4">
    <location>
        <position position="65"/>
    </location>
    <ligand>
        <name>heme b</name>
        <dbReference type="ChEBI" id="CHEBI:60344"/>
    </ligand>
</feature>
<feature type="binding site" description="proximal binding residue" evidence="7">
    <location>
        <position position="94"/>
    </location>
    <ligand>
        <name>heme b</name>
        <dbReference type="ChEBI" id="CHEBI:60344"/>
    </ligand>
    <ligandPart>
        <name>Fe</name>
        <dbReference type="ChEBI" id="CHEBI:18248"/>
    </ligandPart>
</feature>
<feature type="binding site" evidence="4">
    <location>
        <position position="97"/>
    </location>
    <ligand>
        <name>heme b</name>
        <dbReference type="ChEBI" id="CHEBI:60344"/>
    </ligand>
</feature>
<feature type="modified residue" description="Nitrated tyrosine" evidence="2">
    <location>
        <position position="25"/>
    </location>
</feature>
<feature type="modified residue" description="Nitrated tyrosine" evidence="2">
    <location>
        <position position="30"/>
    </location>
</feature>
<feature type="modified residue" description="Phosphoserine" evidence="5">
    <location>
        <position position="45"/>
    </location>
</feature>
<feature type="modified residue" description="Nitrated tyrosine" evidence="2">
    <location>
        <position position="135"/>
    </location>
</feature>
<accession>P27992</accession>
<accession>G7KBK3</accession>
<protein>
    <recommendedName>
        <fullName evidence="12">Leghemoglobin 6</fullName>
        <shortName evidence="12">MtLb6</shortName>
    </recommendedName>
    <alternativeName>
        <fullName evidence="10">Leghemoglobin 1</fullName>
        <shortName evidence="10">MtLb1</shortName>
    </alternativeName>
    <alternativeName>
        <fullName evidence="11">Leghemoglobin 2</fullName>
        <shortName evidence="11">MtLb2</shortName>
    </alternativeName>
</protein>
<name>LGB6_MEDTR</name>
<keyword id="KW-0963">Cytoplasm</keyword>
<keyword id="KW-0349">Heme</keyword>
<keyword id="KW-0408">Iron</keyword>
<keyword id="KW-0479">Metal-binding</keyword>
<keyword id="KW-0944">Nitration</keyword>
<keyword id="KW-0535">Nitrogen fixation</keyword>
<keyword id="KW-0536">Nodulation</keyword>
<keyword id="KW-0539">Nucleus</keyword>
<keyword id="KW-0561">Oxygen transport</keyword>
<keyword id="KW-0597">Phosphoprotein</keyword>
<keyword id="KW-1185">Reference proteome</keyword>
<keyword id="KW-0813">Transport</keyword>
<comment type="function">
    <text evidence="3 6">Leghemoglobin that reversibly binds oxygen O(2) through a pentacoordinated heme iron (By similarity). In root nodules, facilitates the diffusion of oxygen to the bacteroids while preventing the bacterial nitrogenase from being inactivated by buffering dioxygen, nitric oxide and carbon monoxide, and promoting the formation of reactive oxygen species (ROS, e.g. H(2)O(2)) (By similarity). This role is essential for symbiotic nitrogen fixation (SNF) (By similarity).</text>
</comment>
<comment type="subunit">
    <text evidence="4">Monomer.</text>
</comment>
<comment type="subcellular location">
    <subcellularLocation>
        <location evidence="4">Cytoplasm</location>
        <location evidence="4">Cytosol</location>
    </subcellularLocation>
    <subcellularLocation>
        <location evidence="4">Nucleus</location>
    </subcellularLocation>
</comment>
<comment type="tissue specificity">
    <text evidence="8">Root nodules.</text>
</comment>
<comment type="induction">
    <text evidence="9">Locally down-regulated by cadmium (Cd), thus leading to nodule inactivation and impaired biological nitrogen fixation (BNF).</text>
</comment>
<comment type="PTM">
    <text evidence="2">Nitrated in effective nodules and particularly in hypoxic conditions; this mechanism may play a protective role in the symbiosis by buffering toxic peroxynitrite NO(2)(-). Nitration level decrease during nodule senescence.</text>
</comment>
<comment type="PTM">
    <text evidence="5">Phosphorylation at Ser-45 disrupts the molecular environment of its porphyrin ring oxygen binding pocket, thus leading to a reduced oxygen consumption and to the delivery of oxygen O(2) to symbiosomes.</text>
</comment>
<comment type="similarity">
    <text evidence="13">Belongs to the plant globin family.</text>
</comment>
<dbReference type="EMBL" id="X57732">
    <property type="protein sequence ID" value="CAA40899.1"/>
    <property type="molecule type" value="Genomic_DNA"/>
</dbReference>
<dbReference type="EMBL" id="BT136491">
    <property type="protein sequence ID" value="AFK36286.1"/>
    <property type="molecule type" value="mRNA"/>
</dbReference>
<dbReference type="EMBL" id="BT142697">
    <property type="protein sequence ID" value="AFK42491.1"/>
    <property type="molecule type" value="mRNA"/>
</dbReference>
<dbReference type="EMBL" id="CM001221">
    <property type="protein sequence ID" value="AES98238.1"/>
    <property type="molecule type" value="Genomic_DNA"/>
</dbReference>
<dbReference type="EMBL" id="PSQE01000005">
    <property type="protein sequence ID" value="RHN56243.1"/>
    <property type="molecule type" value="Genomic_DNA"/>
</dbReference>
<dbReference type="PIR" id="S17438">
    <property type="entry name" value="S17438"/>
</dbReference>
<dbReference type="RefSeq" id="NP_001411847.1">
    <property type="nucleotide sequence ID" value="NM_001424918.1"/>
</dbReference>
<dbReference type="RefSeq" id="XP_003615280.1">
    <property type="nucleotide sequence ID" value="XM_003615232.2"/>
</dbReference>
<dbReference type="SMR" id="P27992"/>
<dbReference type="PaxDb" id="3880-AES98238"/>
<dbReference type="ProMEX" id="P27992"/>
<dbReference type="EnsemblPlants" id="rna31611">
    <property type="protein sequence ID" value="RHN56243.1"/>
    <property type="gene ID" value="gene31611"/>
</dbReference>
<dbReference type="GeneID" id="11435509"/>
<dbReference type="Gramene" id="rna31611">
    <property type="protein sequence ID" value="RHN56243.1"/>
    <property type="gene ID" value="gene31611"/>
</dbReference>
<dbReference type="KEGG" id="mtr:11435509"/>
<dbReference type="eggNOG" id="KOG3378">
    <property type="taxonomic scope" value="Eukaryota"/>
</dbReference>
<dbReference type="HOGENOM" id="CLU_003827_11_2_1"/>
<dbReference type="OMA" id="TAWEGAY"/>
<dbReference type="OrthoDB" id="2012505at2759"/>
<dbReference type="Proteomes" id="UP000002051">
    <property type="component" value="Chromosome 5"/>
</dbReference>
<dbReference type="Proteomes" id="UP000265566">
    <property type="component" value="Chromosome 5"/>
</dbReference>
<dbReference type="ExpressionAtlas" id="P27992">
    <property type="expression patterns" value="differential"/>
</dbReference>
<dbReference type="GO" id="GO:0005829">
    <property type="term" value="C:cytosol"/>
    <property type="evidence" value="ECO:0007669"/>
    <property type="project" value="UniProtKB-SubCell"/>
</dbReference>
<dbReference type="GO" id="GO:0005634">
    <property type="term" value="C:nucleus"/>
    <property type="evidence" value="ECO:0007669"/>
    <property type="project" value="UniProtKB-SubCell"/>
</dbReference>
<dbReference type="GO" id="GO:0020037">
    <property type="term" value="F:heme binding"/>
    <property type="evidence" value="ECO:0007669"/>
    <property type="project" value="InterPro"/>
</dbReference>
<dbReference type="GO" id="GO:0046872">
    <property type="term" value="F:metal ion binding"/>
    <property type="evidence" value="ECO:0007669"/>
    <property type="project" value="UniProtKB-KW"/>
</dbReference>
<dbReference type="GO" id="GO:0019825">
    <property type="term" value="F:oxygen binding"/>
    <property type="evidence" value="ECO:0007669"/>
    <property type="project" value="InterPro"/>
</dbReference>
<dbReference type="GO" id="GO:0005344">
    <property type="term" value="F:oxygen carrier activity"/>
    <property type="evidence" value="ECO:0007669"/>
    <property type="project" value="UniProtKB-KW"/>
</dbReference>
<dbReference type="GO" id="GO:0009877">
    <property type="term" value="P:nodulation"/>
    <property type="evidence" value="ECO:0007669"/>
    <property type="project" value="UniProtKB-KW"/>
</dbReference>
<dbReference type="GO" id="GO:0046686">
    <property type="term" value="P:response to cadmium ion"/>
    <property type="evidence" value="ECO:0000270"/>
    <property type="project" value="UniProtKB"/>
</dbReference>
<dbReference type="Gene3D" id="1.10.490.10">
    <property type="entry name" value="Globins"/>
    <property type="match status" value="1"/>
</dbReference>
<dbReference type="InterPro" id="IPR000971">
    <property type="entry name" value="Globin"/>
</dbReference>
<dbReference type="InterPro" id="IPR009050">
    <property type="entry name" value="Globin-like_sf"/>
</dbReference>
<dbReference type="InterPro" id="IPR012292">
    <property type="entry name" value="Globin/Proto"/>
</dbReference>
<dbReference type="InterPro" id="IPR001032">
    <property type="entry name" value="Leghaemoglobin-like"/>
</dbReference>
<dbReference type="InterPro" id="IPR019824">
    <property type="entry name" value="Leghaemoglobin_Fe_BS"/>
</dbReference>
<dbReference type="PANTHER" id="PTHR22924">
    <property type="entry name" value="LEGHEMOGLOBIN-RELATED"/>
    <property type="match status" value="1"/>
</dbReference>
<dbReference type="PANTHER" id="PTHR22924:SF92">
    <property type="entry name" value="NON-SYMBIOTIC HEMOGLOBIN 2"/>
    <property type="match status" value="1"/>
</dbReference>
<dbReference type="Pfam" id="PF00042">
    <property type="entry name" value="Globin"/>
    <property type="match status" value="1"/>
</dbReference>
<dbReference type="PRINTS" id="PR00188">
    <property type="entry name" value="PLANTGLOBIN"/>
</dbReference>
<dbReference type="SUPFAM" id="SSF46458">
    <property type="entry name" value="Globin-like"/>
    <property type="match status" value="1"/>
</dbReference>
<dbReference type="PROSITE" id="PS01033">
    <property type="entry name" value="GLOBIN"/>
    <property type="match status" value="1"/>
</dbReference>
<dbReference type="PROSITE" id="PS00208">
    <property type="entry name" value="PLANT_GLOBIN"/>
    <property type="match status" value="1"/>
</dbReference>
<proteinExistence type="evidence at transcript level"/>
<organism>
    <name type="scientific">Medicago truncatula</name>
    <name type="common">Barrel medic</name>
    <name type="synonym">Medicago tribuloides</name>
    <dbReference type="NCBI Taxonomy" id="3880"/>
    <lineage>
        <taxon>Eukaryota</taxon>
        <taxon>Viridiplantae</taxon>
        <taxon>Streptophyta</taxon>
        <taxon>Embryophyta</taxon>
        <taxon>Tracheophyta</taxon>
        <taxon>Spermatophyta</taxon>
        <taxon>Magnoliopsida</taxon>
        <taxon>eudicotyledons</taxon>
        <taxon>Gunneridae</taxon>
        <taxon>Pentapetalae</taxon>
        <taxon>rosids</taxon>
        <taxon>fabids</taxon>
        <taxon>Fabales</taxon>
        <taxon>Fabaceae</taxon>
        <taxon>Papilionoideae</taxon>
        <taxon>50 kb inversion clade</taxon>
        <taxon>NPAAA clade</taxon>
        <taxon>Hologalegina</taxon>
        <taxon>IRL clade</taxon>
        <taxon>Trifolieae</taxon>
        <taxon>Medicago</taxon>
    </lineage>
</organism>
<gene>
    <name evidence="12" type="primary">LB6</name>
    <name evidence="10" type="synonym">LB1</name>
    <name evidence="11" type="synonym">LB2</name>
    <name evidence="14" type="ordered locus">MTR_5g066070</name>
    <name evidence="13" type="ordered locus">Medtr5g066070</name>
    <name evidence="15" type="ORF">MtrunA17_Chr5g0427351</name>
</gene>
<reference key="1">
    <citation type="journal article" date="1991" name="Plant Mol. Biol.">
        <title>Synchronous expression of leghaemoglobin genes in Medicago truncatula during nitrogen-fixing root nodule development and response to exogenously supplied nitrate.</title>
        <authorList>
            <person name="Gallusci P."/>
            <person name="Dedieu A."/>
            <person name="Journet E.P."/>
            <person name="Huguet T."/>
            <person name="Barker D.G."/>
        </authorList>
    </citation>
    <scope>NUCLEOTIDE SEQUENCE [GENOMIC DNA]</scope>
    <scope>TISSUE SPECIFICITY</scope>
    <source>
        <strain>cv. Jemalong</strain>
        <tissue>Root nodule</tissue>
    </source>
</reference>
<reference key="2">
    <citation type="submission" date="2012-05" db="EMBL/GenBank/DDBJ databases">
        <authorList>
            <person name="Krishnakumar V."/>
            <person name="Cheung F."/>
            <person name="Xiao Y."/>
            <person name="Chan A."/>
            <person name="Moskal W.A."/>
            <person name="Town C.D."/>
        </authorList>
    </citation>
    <scope>NUCLEOTIDE SEQUENCE [MRNA]</scope>
</reference>
<reference key="3">
    <citation type="journal article" date="2011" name="Nature">
        <title>The Medicago genome provides insight into the evolution of rhizobial symbioses.</title>
        <authorList>
            <person name="Young N.D."/>
            <person name="Debelle F."/>
            <person name="Oldroyd G.E.D."/>
            <person name="Geurts R."/>
            <person name="Cannon S.B."/>
            <person name="Udvardi M.K."/>
            <person name="Benedito V.A."/>
            <person name="Mayer K.F.X."/>
            <person name="Gouzy J."/>
            <person name="Schoof H."/>
            <person name="Van de Peer Y."/>
            <person name="Proost S."/>
            <person name="Cook D.R."/>
            <person name="Meyers B.C."/>
            <person name="Spannagl M."/>
            <person name="Cheung F."/>
            <person name="De Mita S."/>
            <person name="Krishnakumar V."/>
            <person name="Gundlach H."/>
            <person name="Zhou S."/>
            <person name="Mudge J."/>
            <person name="Bharti A.K."/>
            <person name="Murray J.D."/>
            <person name="Naoumkina M.A."/>
            <person name="Rosen B."/>
            <person name="Silverstein K.A.T."/>
            <person name="Tang H."/>
            <person name="Rombauts S."/>
            <person name="Zhao P.X."/>
            <person name="Zhou P."/>
            <person name="Barbe V."/>
            <person name="Bardou P."/>
            <person name="Bechner M."/>
            <person name="Bellec A."/>
            <person name="Berger A."/>
            <person name="Berges H."/>
            <person name="Bidwell S."/>
            <person name="Bisseling T."/>
            <person name="Choisne N."/>
            <person name="Couloux A."/>
            <person name="Denny R."/>
            <person name="Deshpande S."/>
            <person name="Dai X."/>
            <person name="Doyle J.J."/>
            <person name="Dudez A.-M."/>
            <person name="Farmer A.D."/>
            <person name="Fouteau S."/>
            <person name="Franken C."/>
            <person name="Gibelin C."/>
            <person name="Gish J."/>
            <person name="Goldstein S."/>
            <person name="Gonzalez A.J."/>
            <person name="Green P.J."/>
            <person name="Hallab A."/>
            <person name="Hartog M."/>
            <person name="Hua A."/>
            <person name="Humphray S.J."/>
            <person name="Jeong D.-H."/>
            <person name="Jing Y."/>
            <person name="Jocker A."/>
            <person name="Kenton S.M."/>
            <person name="Kim D.-J."/>
            <person name="Klee K."/>
            <person name="Lai H."/>
            <person name="Lang C."/>
            <person name="Lin S."/>
            <person name="Macmil S.L."/>
            <person name="Magdelenat G."/>
            <person name="Matthews L."/>
            <person name="McCorrison J."/>
            <person name="Monaghan E.L."/>
            <person name="Mun J.-H."/>
            <person name="Najar F.Z."/>
            <person name="Nicholson C."/>
            <person name="Noirot C."/>
            <person name="O'Bleness M."/>
            <person name="Paule C.R."/>
            <person name="Poulain J."/>
            <person name="Prion F."/>
            <person name="Qin B."/>
            <person name="Qu C."/>
            <person name="Retzel E.F."/>
            <person name="Riddle C."/>
            <person name="Sallet E."/>
            <person name="Samain S."/>
            <person name="Samson N."/>
            <person name="Sanders I."/>
            <person name="Saurat O."/>
            <person name="Scarpelli C."/>
            <person name="Schiex T."/>
            <person name="Segurens B."/>
            <person name="Severin A.J."/>
            <person name="Sherrier D.J."/>
            <person name="Shi R."/>
            <person name="Sims S."/>
            <person name="Singer S.R."/>
            <person name="Sinharoy S."/>
            <person name="Sterck L."/>
            <person name="Viollet A."/>
            <person name="Wang B.-B."/>
            <person name="Wang K."/>
            <person name="Wang M."/>
            <person name="Wang X."/>
            <person name="Warfsmann J."/>
            <person name="Weissenbach J."/>
            <person name="White D.D."/>
            <person name="White J.D."/>
            <person name="Wiley G.B."/>
            <person name="Wincker P."/>
            <person name="Xing Y."/>
            <person name="Yang L."/>
            <person name="Yao Z."/>
            <person name="Ying F."/>
            <person name="Zhai J."/>
            <person name="Zhou L."/>
            <person name="Zuber A."/>
            <person name="Denarie J."/>
            <person name="Dixon R.A."/>
            <person name="May G.D."/>
            <person name="Schwartz D.C."/>
            <person name="Rogers J."/>
            <person name="Quetier F."/>
            <person name="Town C.D."/>
            <person name="Roe B.A."/>
        </authorList>
    </citation>
    <scope>NUCLEOTIDE SEQUENCE [LARGE SCALE GENOMIC DNA]</scope>
    <source>
        <strain>cv. Jemalong A17</strain>
    </source>
</reference>
<reference key="4">
    <citation type="journal article" date="2014" name="BMC Genomics">
        <title>An improved genome release (version Mt4.0) for the model legume Medicago truncatula.</title>
        <authorList>
            <person name="Tang H."/>
            <person name="Krishnakumar V."/>
            <person name="Bidwell S."/>
            <person name="Rosen B."/>
            <person name="Chan A."/>
            <person name="Zhou S."/>
            <person name="Gentzbittel L."/>
            <person name="Childs K.L."/>
            <person name="Yandell M."/>
            <person name="Gundlach H."/>
            <person name="Mayer K.F."/>
            <person name="Schwartz D.C."/>
            <person name="Town C.D."/>
        </authorList>
    </citation>
    <scope>GENOME REANNOTATION</scope>
    <source>
        <strain>cv. Jemalong A17</strain>
    </source>
</reference>
<reference key="5">
    <citation type="journal article" date="2018" name="Nat. Plants">
        <title>Whole-genome landscape of Medicago truncatula symbiotic genes.</title>
        <authorList>
            <person name="Pecrix Y."/>
            <person name="Staton S.E."/>
            <person name="Sallet E."/>
            <person name="Lelandais-Briere C."/>
            <person name="Moreau S."/>
            <person name="Carrere S."/>
            <person name="Blein T."/>
            <person name="Jardinaud M.F."/>
            <person name="Latrasse D."/>
            <person name="Zouine M."/>
            <person name="Zahm M."/>
            <person name="Kreplak J."/>
            <person name="Mayjonade B."/>
            <person name="Satge C."/>
            <person name="Perez M."/>
            <person name="Cauet S."/>
            <person name="Marande W."/>
            <person name="Chantry-Darmon C."/>
            <person name="Lopez-Roques C."/>
            <person name="Bouchez O."/>
            <person name="Berard A."/>
            <person name="Debelle F."/>
            <person name="Munos S."/>
            <person name="Bendahmane A."/>
            <person name="Berges H."/>
            <person name="Niebel A."/>
            <person name="Buitink J."/>
            <person name="Frugier F."/>
            <person name="Benhamed M."/>
            <person name="Crespi M."/>
            <person name="Gouzy J."/>
            <person name="Gamas P."/>
        </authorList>
    </citation>
    <scope>NUCLEOTIDE SEQUENCE [LARGE SCALE GENOMIC DNA]</scope>
    <source>
        <strain>cv. Jemalong A17</strain>
        <tissue>Leaf</tissue>
    </source>
</reference>
<reference key="6">
    <citation type="journal article" date="2013" name="J. Exp. Bot.">
        <title>Inhibition of nitrogen fixation in symbiotic Medicago truncatula upon Cd exposure is a local process involving leghaemoglobin.</title>
        <authorList>
            <person name="Marino D."/>
            <person name="Damiani I."/>
            <person name="Gucciardo S."/>
            <person name="Mijangos I."/>
            <person name="Pauly N."/>
            <person name="Puppo A."/>
        </authorList>
    </citation>
    <scope>REPRESSION BY CADMIUM</scope>
    <source>
        <strain>cv. Jemalong J6</strain>
    </source>
</reference>
<reference key="7">
    <citation type="journal article" date="2020" name="New Phytol.">
        <title>Medicago truncatula Phytoglobin 1.1 controls symbiotic nodulation and nitrogen fixation via the regulation of nitric oxide concentration.</title>
        <authorList>
            <person name="Berger A."/>
            <person name="Guinand S."/>
            <person name="Boscari A."/>
            <person name="Puppo A."/>
            <person name="Brouquisse R."/>
        </authorList>
    </citation>
    <scope>GENE FAMILY</scope>
    <scope>NOMENCLATURE</scope>
    <source>
        <strain>cv. Jemalong A17</strain>
    </source>
</reference>
<reference key="8">
    <citation type="journal article" date="2020" name="New Phytol.">
        <title>Hemoglobins in the legume-Rhizobium symbiosis.</title>
        <authorList>
            <person name="Larrainzar E."/>
            <person name="Villar I."/>
            <person name="Rubio M.C."/>
            <person name="Perez-Rontome C."/>
            <person name="Huertas R."/>
            <person name="Sato S."/>
            <person name="Mun J.-H."/>
            <person name="Becana M."/>
        </authorList>
    </citation>
    <scope>REVIEW ON PHYTOGLOBINS</scope>
    <scope>GENE FAMILY</scope>
    <scope>NOMENCLATURE</scope>
</reference>